<reference key="1">
    <citation type="submission" date="2006-02" db="EMBL/GenBank/DDBJ databases">
        <title>Glutaminyl cyclase expressed in Boiga dendrophila venom gland tissue.</title>
        <authorList>
            <person name="Pawlak J."/>
            <person name="Kini M.R."/>
        </authorList>
    </citation>
    <scope>NUCLEOTIDE SEQUENCE [MRNA]</scope>
    <source>
        <tissue>Venom gland</tissue>
    </source>
</reference>
<name>QPCT_BOIDE</name>
<comment type="function">
    <text evidence="1">Responsible for the biosynthesis of pyroglutamyl peptides. Has a bias against acidic and tryptophan residues adjacent to the N-terminal glutaminyl residue and a lack of importance of chain length after the second residue. Also catalyzes N-terminal pyroglutamate formation (By similarity).</text>
</comment>
<comment type="catalytic activity">
    <reaction>
        <text>N-terminal L-glutaminyl-[peptide] = N-terminal 5-oxo-L-prolyl-[peptide] + NH4(+)</text>
        <dbReference type="Rhea" id="RHEA:23652"/>
        <dbReference type="Rhea" id="RHEA-COMP:11736"/>
        <dbReference type="Rhea" id="RHEA-COMP:11846"/>
        <dbReference type="ChEBI" id="CHEBI:28938"/>
        <dbReference type="ChEBI" id="CHEBI:64722"/>
        <dbReference type="ChEBI" id="CHEBI:87215"/>
        <dbReference type="EC" id="2.3.2.5"/>
    </reaction>
</comment>
<comment type="subcellular location">
    <subcellularLocation>
        <location evidence="1">Secreted</location>
    </subcellularLocation>
</comment>
<comment type="tissue specificity">
    <text>Expressed by the venom gland.</text>
</comment>
<comment type="similarity">
    <text evidence="5">Belongs to the glutaminyl-peptide cyclotransferase family.</text>
</comment>
<comment type="caution">
    <text evidence="2 3">It is unclear whether this protein requires a metal cofactor for catalysis. It was originally proposed to be a Zn(2+)-dependent metalloenzyme based on structural similarities to bacterial aminopeptidases and the observation that it can bind Zn(2+) ions, typically in a 1:1 stoichiometry (By similarity). However, a recent study suggests a Zn(2+)-independent catalytic mechanism (By similarity).</text>
</comment>
<feature type="signal peptide" evidence="4">
    <location>
        <begin position="1"/>
        <end position="23"/>
    </location>
</feature>
<feature type="chain" id="PRO_0000407860" description="Glutaminyl-peptide cyclotransferase">
    <location>
        <begin position="24"/>
        <end position="368"/>
    </location>
</feature>
<feature type="active site" description="Proton acceptor" evidence="3">
    <location>
        <position position="207"/>
    </location>
</feature>
<feature type="active site" description="Proton acceptor" evidence="3">
    <location>
        <position position="254"/>
    </location>
</feature>
<feature type="binding site" evidence="3">
    <location>
        <position position="164"/>
    </location>
    <ligand>
        <name>Zn(2+)</name>
        <dbReference type="ChEBI" id="CHEBI:29105"/>
    </ligand>
</feature>
<feature type="binding site" evidence="3">
    <location>
        <position position="208"/>
    </location>
    <ligand>
        <name>Zn(2+)</name>
        <dbReference type="ChEBI" id="CHEBI:29105"/>
    </ligand>
</feature>
<feature type="binding site" evidence="3">
    <location>
        <position position="336"/>
    </location>
    <ligand>
        <name>Zn(2+)</name>
        <dbReference type="ChEBI" id="CHEBI:29105"/>
    </ligand>
</feature>
<feature type="glycosylation site" description="N-linked (GlcNAc...) asparagine" evidence="4">
    <location>
        <position position="53"/>
    </location>
</feature>
<feature type="glycosylation site" description="N-linked (GlcNAc...) asparagine" evidence="4">
    <location>
        <position position="292"/>
    </location>
</feature>
<feature type="glycosylation site" description="N-linked (GlcNAc...) asparagine" evidence="4">
    <location>
        <position position="352"/>
    </location>
</feature>
<feature type="disulfide bond" evidence="3">
    <location>
        <begin position="143"/>
        <end position="169"/>
    </location>
</feature>
<evidence type="ECO:0000250" key="1"/>
<evidence type="ECO:0000250" key="2">
    <source>
        <dbReference type="UniProtKB" id="B7QK46"/>
    </source>
</evidence>
<evidence type="ECO:0000250" key="3">
    <source>
        <dbReference type="UniProtKB" id="Q16769"/>
    </source>
</evidence>
<evidence type="ECO:0000255" key="4"/>
<evidence type="ECO:0000305" key="5"/>
<organism>
    <name type="scientific">Boiga dendrophila</name>
    <name type="common">Mangrove snake</name>
    <name type="synonym">Gold-ringed cat snake</name>
    <dbReference type="NCBI Taxonomy" id="46286"/>
    <lineage>
        <taxon>Eukaryota</taxon>
        <taxon>Metazoa</taxon>
        <taxon>Chordata</taxon>
        <taxon>Craniata</taxon>
        <taxon>Vertebrata</taxon>
        <taxon>Euteleostomi</taxon>
        <taxon>Lepidosauria</taxon>
        <taxon>Squamata</taxon>
        <taxon>Bifurcata</taxon>
        <taxon>Unidentata</taxon>
        <taxon>Episquamata</taxon>
        <taxon>Toxicofera</taxon>
        <taxon>Serpentes</taxon>
        <taxon>Colubroidea</taxon>
        <taxon>Colubridae</taxon>
        <taxon>Colubrinae</taxon>
        <taxon>Boiga</taxon>
    </lineage>
</organism>
<keyword id="KW-0012">Acyltransferase</keyword>
<keyword id="KW-1015">Disulfide bond</keyword>
<keyword id="KW-0325">Glycoprotein</keyword>
<keyword id="KW-0479">Metal-binding</keyword>
<keyword id="KW-0964">Secreted</keyword>
<keyword id="KW-0732">Signal</keyword>
<keyword id="KW-0808">Transferase</keyword>
<keyword id="KW-0862">Zinc</keyword>
<dbReference type="EC" id="2.3.2.5"/>
<dbReference type="EMBL" id="DQ404534">
    <property type="protein sequence ID" value="ABD64600.1"/>
    <property type="molecule type" value="mRNA"/>
</dbReference>
<dbReference type="SMR" id="A7ISW2"/>
<dbReference type="MEROPS" id="M28.974"/>
<dbReference type="GlyCosmos" id="A7ISW2">
    <property type="glycosylation" value="3 sites, No reported glycans"/>
</dbReference>
<dbReference type="BRENDA" id="2.3.2.5">
    <property type="organism ID" value="9167"/>
</dbReference>
<dbReference type="GO" id="GO:0005576">
    <property type="term" value="C:extracellular region"/>
    <property type="evidence" value="ECO:0007669"/>
    <property type="project" value="UniProtKB-SubCell"/>
</dbReference>
<dbReference type="GO" id="GO:0016603">
    <property type="term" value="F:glutaminyl-peptide cyclotransferase activity"/>
    <property type="evidence" value="ECO:0000250"/>
    <property type="project" value="UniProtKB"/>
</dbReference>
<dbReference type="GO" id="GO:0008270">
    <property type="term" value="F:zinc ion binding"/>
    <property type="evidence" value="ECO:0000250"/>
    <property type="project" value="UniProtKB"/>
</dbReference>
<dbReference type="GO" id="GO:0017186">
    <property type="term" value="P:peptidyl-pyroglutamic acid biosynthetic process, using glutaminyl-peptide cyclotransferase"/>
    <property type="evidence" value="ECO:0000250"/>
    <property type="project" value="UniProtKB"/>
</dbReference>
<dbReference type="CDD" id="cd03880">
    <property type="entry name" value="M28_QC_like"/>
    <property type="match status" value="1"/>
</dbReference>
<dbReference type="FunFam" id="3.40.630.10:FF:000029">
    <property type="entry name" value="Glutaminyl-peptide cyclotransferase"/>
    <property type="match status" value="1"/>
</dbReference>
<dbReference type="Gene3D" id="3.40.630.10">
    <property type="entry name" value="Zn peptidases"/>
    <property type="match status" value="1"/>
</dbReference>
<dbReference type="InterPro" id="IPR037457">
    <property type="entry name" value="M28_QC"/>
</dbReference>
<dbReference type="InterPro" id="IPR007484">
    <property type="entry name" value="Peptidase_M28"/>
</dbReference>
<dbReference type="InterPro" id="IPR040234">
    <property type="entry name" value="QC/QCL"/>
</dbReference>
<dbReference type="PANTHER" id="PTHR12283">
    <property type="entry name" value="GLUTAMINYL-PEPTIDE CYCLOTRANSFERASE"/>
    <property type="match status" value="1"/>
</dbReference>
<dbReference type="PANTHER" id="PTHR12283:SF5">
    <property type="entry name" value="GLUTAMINYL-PEPTIDE CYCLOTRANSFERASE"/>
    <property type="match status" value="1"/>
</dbReference>
<dbReference type="Pfam" id="PF04389">
    <property type="entry name" value="Peptidase_M28"/>
    <property type="match status" value="1"/>
</dbReference>
<dbReference type="SUPFAM" id="SSF53187">
    <property type="entry name" value="Zn-dependent exopeptidases"/>
    <property type="match status" value="1"/>
</dbReference>
<protein>
    <recommendedName>
        <fullName>Glutaminyl-peptide cyclotransferase</fullName>
        <ecNumber>2.3.2.5</ecNumber>
    </recommendedName>
    <alternativeName>
        <fullName>Glutaminyl cyclase</fullName>
        <shortName>QC</shortName>
    </alternativeName>
    <alternativeName>
        <fullName>Glutaminyl-tRNA cyclotransferase</fullName>
    </alternativeName>
</protein>
<accession>A7ISW2</accession>
<gene>
    <name type="primary">QPCT</name>
</gene>
<proteinExistence type="evidence at transcript level"/>
<sequence length="368" mass="41990">MAGERRDSKAAAFFCLAWALCLALPGFPQHVGGREDRADWTQEKYSHRPTILNATSILQVTSQTNVNRMWQNDLHPILIERYPGSPGSYAVRQHIKHRLQGLQAGWLVEEDTFQSHTPYGYRTFSNIISTLNPLAKRHLVVACHYDSKYFLPQLDGKVFVGATDSAVPCAMMLELARSLDRQLSFLKQSSLPPKADLSLKLIFFDGEEAFVRWSPSDSLYGSRSLAQKMASTPHPPGARNTNQIQGIDLFVLLDLIGARNPVFPVYFLNTARWFGRLEAIEQSLHDLGLLNNYSSERQYFRSNIRRYPVEDDHIPFLRRGVPILHLIPSPFPRVWHTMEDNEENLDKPTIDNISKILQVFVLEYLNLG</sequence>